<reference key="1">
    <citation type="journal article" date="1993" name="Mol. Biol. Cell">
        <title>Isolation and characterization of the fission yeast protein phosphatase gene ppe1+ involved in cell shape control and mitosis.</title>
        <authorList>
            <person name="Shimanuki M."/>
            <person name="Kinoshita N."/>
            <person name="Ohkura H."/>
            <person name="Yoshida T."/>
            <person name="Toda T."/>
            <person name="Yanagida M."/>
        </authorList>
    </citation>
    <scope>NUCLEOTIDE SEQUENCE [GENOMIC DNA]</scope>
    <source>
        <strain>972 / HM123</strain>
    </source>
</reference>
<reference key="2">
    <citation type="journal article" date="1993" name="Mol. Biol. Cell">
        <title>Interaction of the pim1/spi1 mitotic checkpoint with a protein phosphatase.</title>
        <authorList>
            <person name="Matsumoto T."/>
            <person name="Beach D."/>
        </authorList>
    </citation>
    <scope>NUCLEOTIDE SEQUENCE [GENOMIC DNA]</scope>
</reference>
<reference key="3">
    <citation type="journal article" date="2002" name="Nature">
        <title>The genome sequence of Schizosaccharomyces pombe.</title>
        <authorList>
            <person name="Wood V."/>
            <person name="Gwilliam R."/>
            <person name="Rajandream M.A."/>
            <person name="Lyne M.H."/>
            <person name="Lyne R."/>
            <person name="Stewart A."/>
            <person name="Sgouros J.G."/>
            <person name="Peat N."/>
            <person name="Hayles J."/>
            <person name="Baker S.G."/>
            <person name="Basham D."/>
            <person name="Bowman S."/>
            <person name="Brooks K."/>
            <person name="Brown D."/>
            <person name="Brown S."/>
            <person name="Chillingworth T."/>
            <person name="Churcher C.M."/>
            <person name="Collins M."/>
            <person name="Connor R."/>
            <person name="Cronin A."/>
            <person name="Davis P."/>
            <person name="Feltwell T."/>
            <person name="Fraser A."/>
            <person name="Gentles S."/>
            <person name="Goble A."/>
            <person name="Hamlin N."/>
            <person name="Harris D.E."/>
            <person name="Hidalgo J."/>
            <person name="Hodgson G."/>
            <person name="Holroyd S."/>
            <person name="Hornsby T."/>
            <person name="Howarth S."/>
            <person name="Huckle E.J."/>
            <person name="Hunt S."/>
            <person name="Jagels K."/>
            <person name="James K.D."/>
            <person name="Jones L."/>
            <person name="Jones M."/>
            <person name="Leather S."/>
            <person name="McDonald S."/>
            <person name="McLean J."/>
            <person name="Mooney P."/>
            <person name="Moule S."/>
            <person name="Mungall K.L."/>
            <person name="Murphy L.D."/>
            <person name="Niblett D."/>
            <person name="Odell C."/>
            <person name="Oliver K."/>
            <person name="O'Neil S."/>
            <person name="Pearson D."/>
            <person name="Quail M.A."/>
            <person name="Rabbinowitsch E."/>
            <person name="Rutherford K.M."/>
            <person name="Rutter S."/>
            <person name="Saunders D."/>
            <person name="Seeger K."/>
            <person name="Sharp S."/>
            <person name="Skelton J."/>
            <person name="Simmonds M.N."/>
            <person name="Squares R."/>
            <person name="Squares S."/>
            <person name="Stevens K."/>
            <person name="Taylor K."/>
            <person name="Taylor R.G."/>
            <person name="Tivey A."/>
            <person name="Walsh S.V."/>
            <person name="Warren T."/>
            <person name="Whitehead S."/>
            <person name="Woodward J.R."/>
            <person name="Volckaert G."/>
            <person name="Aert R."/>
            <person name="Robben J."/>
            <person name="Grymonprez B."/>
            <person name="Weltjens I."/>
            <person name="Vanstreels E."/>
            <person name="Rieger M."/>
            <person name="Schaefer M."/>
            <person name="Mueller-Auer S."/>
            <person name="Gabel C."/>
            <person name="Fuchs M."/>
            <person name="Duesterhoeft A."/>
            <person name="Fritzc C."/>
            <person name="Holzer E."/>
            <person name="Moestl D."/>
            <person name="Hilbert H."/>
            <person name="Borzym K."/>
            <person name="Langer I."/>
            <person name="Beck A."/>
            <person name="Lehrach H."/>
            <person name="Reinhardt R."/>
            <person name="Pohl T.M."/>
            <person name="Eger P."/>
            <person name="Zimmermann W."/>
            <person name="Wedler H."/>
            <person name="Wambutt R."/>
            <person name="Purnelle B."/>
            <person name="Goffeau A."/>
            <person name="Cadieu E."/>
            <person name="Dreano S."/>
            <person name="Gloux S."/>
            <person name="Lelaure V."/>
            <person name="Mottier S."/>
            <person name="Galibert F."/>
            <person name="Aves S.J."/>
            <person name="Xiang Z."/>
            <person name="Hunt C."/>
            <person name="Moore K."/>
            <person name="Hurst S.M."/>
            <person name="Lucas M."/>
            <person name="Rochet M."/>
            <person name="Gaillardin C."/>
            <person name="Tallada V.A."/>
            <person name="Garzon A."/>
            <person name="Thode G."/>
            <person name="Daga R.R."/>
            <person name="Cruzado L."/>
            <person name="Jimenez J."/>
            <person name="Sanchez M."/>
            <person name="del Rey F."/>
            <person name="Benito J."/>
            <person name="Dominguez A."/>
            <person name="Revuelta J.L."/>
            <person name="Moreno S."/>
            <person name="Armstrong J."/>
            <person name="Forsburg S.L."/>
            <person name="Cerutti L."/>
            <person name="Lowe T."/>
            <person name="McCombie W.R."/>
            <person name="Paulsen I."/>
            <person name="Potashkin J."/>
            <person name="Shpakovski G.V."/>
            <person name="Ussery D."/>
            <person name="Barrell B.G."/>
            <person name="Nurse P."/>
        </authorList>
    </citation>
    <scope>NUCLEOTIDE SEQUENCE [LARGE SCALE GENOMIC DNA]</scope>
    <source>
        <strain>972 / ATCC 24843</strain>
    </source>
</reference>
<reference key="4">
    <citation type="journal article" date="2003" name="EMBO J.">
        <title>The role of Ppe1/PP6 phosphatase for equal chromosome segregation in fission yeast kinetochore.</title>
        <authorList>
            <person name="Goshima G."/>
            <person name="Iwasaki O."/>
            <person name="Obuse C."/>
            <person name="Yanagida M."/>
        </authorList>
    </citation>
    <scope>FUNCTION</scope>
    <scope>INTERACTION WITH STS5; ECK1 AND MIS12</scope>
    <scope>SUBCELLULAR LOCATION</scope>
</reference>
<name>PPE1_SCHPO</name>
<feature type="chain" id="PRO_0000058882" description="Serine/threonine-protein phosphatase ppe1">
    <location>
        <begin position="1"/>
        <end position="305"/>
    </location>
</feature>
<feature type="active site" description="Proton donor" evidence="1">
    <location>
        <position position="112"/>
    </location>
</feature>
<feature type="binding site" evidence="1">
    <location>
        <position position="51"/>
    </location>
    <ligand>
        <name>Mn(2+)</name>
        <dbReference type="ChEBI" id="CHEBI:29035"/>
        <label>1</label>
    </ligand>
</feature>
<feature type="binding site" evidence="1">
    <location>
        <position position="53"/>
    </location>
    <ligand>
        <name>Mn(2+)</name>
        <dbReference type="ChEBI" id="CHEBI:29035"/>
        <label>1</label>
    </ligand>
</feature>
<feature type="binding site" evidence="1">
    <location>
        <position position="79"/>
    </location>
    <ligand>
        <name>Mn(2+)</name>
        <dbReference type="ChEBI" id="CHEBI:29035"/>
        <label>1</label>
    </ligand>
</feature>
<feature type="binding site" evidence="1">
    <location>
        <position position="79"/>
    </location>
    <ligand>
        <name>Mn(2+)</name>
        <dbReference type="ChEBI" id="CHEBI:29035"/>
        <label>2</label>
    </ligand>
</feature>
<feature type="binding site" evidence="1">
    <location>
        <position position="111"/>
    </location>
    <ligand>
        <name>Mn(2+)</name>
        <dbReference type="ChEBI" id="CHEBI:29035"/>
        <label>2</label>
    </ligand>
</feature>
<feature type="binding site" evidence="1">
    <location>
        <position position="161"/>
    </location>
    <ligand>
        <name>Mn(2+)</name>
        <dbReference type="ChEBI" id="CHEBI:29035"/>
        <label>2</label>
    </ligand>
</feature>
<feature type="binding site" evidence="1">
    <location>
        <position position="235"/>
    </location>
    <ligand>
        <name>Mn(2+)</name>
        <dbReference type="ChEBI" id="CHEBI:29035"/>
        <label>2</label>
    </ligand>
</feature>
<keyword id="KW-0131">Cell cycle</keyword>
<keyword id="KW-0132">Cell division</keyword>
<keyword id="KW-0133">Cell shape</keyword>
<keyword id="KW-0378">Hydrolase</keyword>
<keyword id="KW-0464">Manganese</keyword>
<keyword id="KW-0479">Metal-binding</keyword>
<keyword id="KW-0498">Mitosis</keyword>
<keyword id="KW-0539">Nucleus</keyword>
<keyword id="KW-0904">Protein phosphatase</keyword>
<keyword id="KW-1185">Reference proteome</keyword>
<evidence type="ECO:0000250" key="1"/>
<evidence type="ECO:0000269" key="2">
    <source>
    </source>
</evidence>
<evidence type="ECO:0000305" key="3"/>
<protein>
    <recommendedName>
        <fullName>Serine/threonine-protein phosphatase ppe1</fullName>
        <ecNumber>3.1.3.16</ecNumber>
    </recommendedName>
    <alternativeName>
        <fullName>Phosphatase esp1</fullName>
    </alternativeName>
</protein>
<gene>
    <name type="primary">ppe1</name>
    <name type="synonym">esp1</name>
    <name type="synonym">ppx1</name>
    <name type="ORF">SPCC1739.12</name>
</gene>
<comment type="function">
    <text evidence="2">Has a role in chromosome segregation. May provide a dynamic connection between kinetochore microtubules and kinetochore chromatin. Negatively regulates mis12.</text>
</comment>
<comment type="catalytic activity">
    <reaction>
        <text>O-phospho-L-seryl-[protein] + H2O = L-seryl-[protein] + phosphate</text>
        <dbReference type="Rhea" id="RHEA:20629"/>
        <dbReference type="Rhea" id="RHEA-COMP:9863"/>
        <dbReference type="Rhea" id="RHEA-COMP:11604"/>
        <dbReference type="ChEBI" id="CHEBI:15377"/>
        <dbReference type="ChEBI" id="CHEBI:29999"/>
        <dbReference type="ChEBI" id="CHEBI:43474"/>
        <dbReference type="ChEBI" id="CHEBI:83421"/>
        <dbReference type="EC" id="3.1.3.16"/>
    </reaction>
</comment>
<comment type="catalytic activity">
    <reaction>
        <text>O-phospho-L-threonyl-[protein] + H2O = L-threonyl-[protein] + phosphate</text>
        <dbReference type="Rhea" id="RHEA:47004"/>
        <dbReference type="Rhea" id="RHEA-COMP:11060"/>
        <dbReference type="Rhea" id="RHEA-COMP:11605"/>
        <dbReference type="ChEBI" id="CHEBI:15377"/>
        <dbReference type="ChEBI" id="CHEBI:30013"/>
        <dbReference type="ChEBI" id="CHEBI:43474"/>
        <dbReference type="ChEBI" id="CHEBI:61977"/>
        <dbReference type="EC" id="3.1.3.16"/>
    </reaction>
</comment>
<comment type="cofactor">
    <cofactor evidence="1">
        <name>Mn(2+)</name>
        <dbReference type="ChEBI" id="CHEBI:29035"/>
    </cofactor>
    <text evidence="1">Binds 2 manganese ions per subunit.</text>
</comment>
<comment type="subunit">
    <text evidence="2">Interacts with sts5, ekc1 and mis12.</text>
</comment>
<comment type="interaction">
    <interactant intactId="EBI-1153118">
        <id>P36614</id>
    </interactant>
    <interactant intactId="EBI-1153096">
        <id>O74511</id>
        <label>ekc1</label>
    </interactant>
    <organismsDiffer>false</organismsDiffer>
    <experiments>2</experiments>
</comment>
<comment type="subcellular location">
    <subcellularLocation>
        <location evidence="2">Nucleus</location>
    </subcellularLocation>
    <text>Associated with chromatin.</text>
</comment>
<comment type="similarity">
    <text evidence="3">Belongs to the PPP phosphatase family. PP-6 (PP-V) subfamily.</text>
</comment>
<dbReference type="EC" id="3.1.3.16"/>
<dbReference type="EMBL" id="D13712">
    <property type="protein sequence ID" value="BAA02865.1"/>
    <property type="molecule type" value="Genomic_DNA"/>
</dbReference>
<dbReference type="EMBL" id="Z18925">
    <property type="protein sequence ID" value="CAA79358.1"/>
    <property type="molecule type" value="Genomic_DNA"/>
</dbReference>
<dbReference type="EMBL" id="CU329672">
    <property type="protein sequence ID" value="CAA20786.1"/>
    <property type="molecule type" value="Genomic_DNA"/>
</dbReference>
<dbReference type="PIR" id="A47727">
    <property type="entry name" value="A47727"/>
</dbReference>
<dbReference type="RefSeq" id="NP_588420.1">
    <property type="nucleotide sequence ID" value="NM_001023411.2"/>
</dbReference>
<dbReference type="SMR" id="P36614"/>
<dbReference type="BioGRID" id="275341">
    <property type="interactions" value="35"/>
</dbReference>
<dbReference type="FunCoup" id="P36614">
    <property type="interactions" value="830"/>
</dbReference>
<dbReference type="IntAct" id="P36614">
    <property type="interactions" value="2"/>
</dbReference>
<dbReference type="STRING" id="284812.P36614"/>
<dbReference type="iPTMnet" id="P36614"/>
<dbReference type="PaxDb" id="4896-SPCC1739.12.1"/>
<dbReference type="EnsemblFungi" id="SPCC1739.12.1">
    <property type="protein sequence ID" value="SPCC1739.12.1:pep"/>
    <property type="gene ID" value="SPCC1739.12"/>
</dbReference>
<dbReference type="GeneID" id="2538758"/>
<dbReference type="KEGG" id="spo:2538758"/>
<dbReference type="PomBase" id="SPCC1739.12">
    <property type="gene designation" value="ppe1"/>
</dbReference>
<dbReference type="VEuPathDB" id="FungiDB:SPCC1739.12"/>
<dbReference type="eggNOG" id="KOG0373">
    <property type="taxonomic scope" value="Eukaryota"/>
</dbReference>
<dbReference type="HOGENOM" id="CLU_004962_8_1_1"/>
<dbReference type="InParanoid" id="P36614"/>
<dbReference type="OMA" id="MCLKVKY"/>
<dbReference type="PhylomeDB" id="P36614"/>
<dbReference type="PRO" id="PR:P36614"/>
<dbReference type="Proteomes" id="UP000002485">
    <property type="component" value="Chromosome III"/>
</dbReference>
<dbReference type="GO" id="GO:0000785">
    <property type="term" value="C:chromatin"/>
    <property type="evidence" value="ECO:0000314"/>
    <property type="project" value="PomBase"/>
</dbReference>
<dbReference type="GO" id="GO:0005737">
    <property type="term" value="C:cytoplasm"/>
    <property type="evidence" value="ECO:0000318"/>
    <property type="project" value="GO_Central"/>
</dbReference>
<dbReference type="GO" id="GO:0005829">
    <property type="term" value="C:cytosol"/>
    <property type="evidence" value="ECO:0007005"/>
    <property type="project" value="PomBase"/>
</dbReference>
<dbReference type="GO" id="GO:0005634">
    <property type="term" value="C:nucleus"/>
    <property type="evidence" value="ECO:0007005"/>
    <property type="project" value="PomBase"/>
</dbReference>
<dbReference type="GO" id="GO:0008287">
    <property type="term" value="C:protein serine/threonine phosphatase complex"/>
    <property type="evidence" value="ECO:0000353"/>
    <property type="project" value="PomBase"/>
</dbReference>
<dbReference type="GO" id="GO:0046872">
    <property type="term" value="F:metal ion binding"/>
    <property type="evidence" value="ECO:0007669"/>
    <property type="project" value="UniProtKB-KW"/>
</dbReference>
<dbReference type="GO" id="GO:0004721">
    <property type="term" value="F:phosphoprotein phosphatase activity"/>
    <property type="evidence" value="ECO:0000316"/>
    <property type="project" value="PomBase"/>
</dbReference>
<dbReference type="GO" id="GO:0004722">
    <property type="term" value="F:protein serine/threonine phosphatase activity"/>
    <property type="evidence" value="ECO:0000318"/>
    <property type="project" value="GO_Central"/>
</dbReference>
<dbReference type="GO" id="GO:0051301">
    <property type="term" value="P:cell division"/>
    <property type="evidence" value="ECO:0007669"/>
    <property type="project" value="UniProtKB-KW"/>
</dbReference>
<dbReference type="GO" id="GO:0000082">
    <property type="term" value="P:G1/S transition of mitotic cell cycle"/>
    <property type="evidence" value="ECO:0000318"/>
    <property type="project" value="GO_Central"/>
</dbReference>
<dbReference type="GO" id="GO:2001211">
    <property type="term" value="P:negative regulation of isopentenyl diphosphate biosynthetic process, mevalonate pathway"/>
    <property type="evidence" value="ECO:0000315"/>
    <property type="project" value="PomBase"/>
</dbReference>
<dbReference type="GO" id="GO:0008360">
    <property type="term" value="P:regulation of cell shape"/>
    <property type="evidence" value="ECO:0007669"/>
    <property type="project" value="UniProtKB-KW"/>
</dbReference>
<dbReference type="GO" id="GO:1903432">
    <property type="term" value="P:regulation of TORC1 signaling"/>
    <property type="evidence" value="ECO:0000266"/>
    <property type="project" value="PomBase"/>
</dbReference>
<dbReference type="CDD" id="cd07415">
    <property type="entry name" value="MPP_PP2A_PP4_PP6"/>
    <property type="match status" value="1"/>
</dbReference>
<dbReference type="FunFam" id="3.60.21.10:FF:000005">
    <property type="entry name" value="Serine/threonine-protein phosphatase"/>
    <property type="match status" value="1"/>
</dbReference>
<dbReference type="Gene3D" id="3.60.21.10">
    <property type="match status" value="1"/>
</dbReference>
<dbReference type="InterPro" id="IPR004843">
    <property type="entry name" value="Calcineurin-like_PHP_ApaH"/>
</dbReference>
<dbReference type="InterPro" id="IPR029052">
    <property type="entry name" value="Metallo-depent_PP-like"/>
</dbReference>
<dbReference type="InterPro" id="IPR047129">
    <property type="entry name" value="PPA2-like"/>
</dbReference>
<dbReference type="InterPro" id="IPR006186">
    <property type="entry name" value="Ser/Thr-sp_prot-phosphatase"/>
</dbReference>
<dbReference type="PANTHER" id="PTHR45619">
    <property type="entry name" value="SERINE/THREONINE-PROTEIN PHOSPHATASE PP2A-RELATED"/>
    <property type="match status" value="1"/>
</dbReference>
<dbReference type="Pfam" id="PF00149">
    <property type="entry name" value="Metallophos"/>
    <property type="match status" value="1"/>
</dbReference>
<dbReference type="PRINTS" id="PR00114">
    <property type="entry name" value="STPHPHTASE"/>
</dbReference>
<dbReference type="SMART" id="SM00156">
    <property type="entry name" value="PP2Ac"/>
    <property type="match status" value="1"/>
</dbReference>
<dbReference type="SUPFAM" id="SSF56300">
    <property type="entry name" value="Metallo-dependent phosphatases"/>
    <property type="match status" value="1"/>
</dbReference>
<dbReference type="PROSITE" id="PS00125">
    <property type="entry name" value="SER_THR_PHOSPHATASE"/>
    <property type="match status" value="1"/>
</dbReference>
<organism>
    <name type="scientific">Schizosaccharomyces pombe (strain 972 / ATCC 24843)</name>
    <name type="common">Fission yeast</name>
    <dbReference type="NCBI Taxonomy" id="284812"/>
    <lineage>
        <taxon>Eukaryota</taxon>
        <taxon>Fungi</taxon>
        <taxon>Dikarya</taxon>
        <taxon>Ascomycota</taxon>
        <taxon>Taphrinomycotina</taxon>
        <taxon>Schizosaccharomycetes</taxon>
        <taxon>Schizosaccharomycetales</taxon>
        <taxon>Schizosaccharomycetaceae</taxon>
        <taxon>Schizosaccharomyces</taxon>
    </lineage>
</organism>
<sequence length="305" mass="35259">MFDLDEWIATVRKCKYLPEHQLKRLCEMVKVILMEESNIQPVRTPVTVCGDIHGQFYDLLELFRVGGELPSTNYIFMGDFVDRGYFSLETFTLFMLLKARYPDKITLLRGNHESRQITQVYGFYDECQTKYGNANVWKYCCQVFDFLTLAAVIDNKILCVHGGLSPEVRTLDQIRILARAQEIPHEGSFCDLMWSDPEDIESWTVSPRGAGWLFGSKVTTEFSQINDLTLIARAHQLVQEGYKYHFADKNLVTVWSAPNYCYRCGNVASVMKVDESLEPEFRIFSAVADEDRTVPPSRKRSEYFI</sequence>
<proteinExistence type="evidence at protein level"/>
<accession>P36614</accession>